<feature type="chain" id="PRO_0000322517" description="V-type ATP synthase subunit E">
    <location>
        <begin position="1"/>
        <end position="198"/>
    </location>
</feature>
<keyword id="KW-0066">ATP synthesis</keyword>
<keyword id="KW-0375">Hydrogen ion transport</keyword>
<keyword id="KW-0406">Ion transport</keyword>
<keyword id="KW-0813">Transport</keyword>
<comment type="function">
    <text evidence="1">Produces ATP from ADP in the presence of a proton gradient across the membrane.</text>
</comment>
<comment type="similarity">
    <text evidence="1">Belongs to the V-ATPase E subunit family.</text>
</comment>
<gene>
    <name evidence="1" type="primary">atpE</name>
    <name type="ordered locus">CPF_1893</name>
</gene>
<evidence type="ECO:0000255" key="1">
    <source>
        <dbReference type="HAMAP-Rule" id="MF_00311"/>
    </source>
</evidence>
<sequence>MSNLNNLTSKILNDAEEKKKYILADAEAQKDKIISKKTNRAEADKEEIITKANIEAEVKKARIISNAKLSVRNDMLRAKQDVISKVFNEAIEKLQNLSNGDYKYYVISTLDSLELEGTEVIIINEKDKDIFSNEFLEALNKELESKGKKGSITLNMEGKFNGGFILDRNGIQINNTFEALINSLRGELEFEVNKVLFD</sequence>
<protein>
    <recommendedName>
        <fullName>V-type ATP synthase subunit E</fullName>
    </recommendedName>
    <alternativeName>
        <fullName evidence="1">V-ATPase subunit E</fullName>
    </alternativeName>
</protein>
<name>VATE_CLOP1</name>
<proteinExistence type="inferred from homology"/>
<dbReference type="EMBL" id="CP000246">
    <property type="protein sequence ID" value="ABG82231.1"/>
    <property type="molecule type" value="Genomic_DNA"/>
</dbReference>
<dbReference type="RefSeq" id="WP_003449544.1">
    <property type="nucleotide sequence ID" value="NC_008261.1"/>
</dbReference>
<dbReference type="SMR" id="Q0TPW4"/>
<dbReference type="STRING" id="195103.CPF_1893"/>
<dbReference type="PaxDb" id="195103-CPF_1893"/>
<dbReference type="KEGG" id="cpf:CPF_1893"/>
<dbReference type="eggNOG" id="COG1390">
    <property type="taxonomic scope" value="Bacteria"/>
</dbReference>
<dbReference type="HOGENOM" id="CLU_105846_0_0_9"/>
<dbReference type="Proteomes" id="UP000001823">
    <property type="component" value="Chromosome"/>
</dbReference>
<dbReference type="GO" id="GO:0033178">
    <property type="term" value="C:proton-transporting two-sector ATPase complex, catalytic domain"/>
    <property type="evidence" value="ECO:0007669"/>
    <property type="project" value="InterPro"/>
</dbReference>
<dbReference type="GO" id="GO:0005524">
    <property type="term" value="F:ATP binding"/>
    <property type="evidence" value="ECO:0007669"/>
    <property type="project" value="UniProtKB-UniRule"/>
</dbReference>
<dbReference type="GO" id="GO:0046933">
    <property type="term" value="F:proton-transporting ATP synthase activity, rotational mechanism"/>
    <property type="evidence" value="ECO:0007669"/>
    <property type="project" value="UniProtKB-UniRule"/>
</dbReference>
<dbReference type="GO" id="GO:0046961">
    <property type="term" value="F:proton-transporting ATPase activity, rotational mechanism"/>
    <property type="evidence" value="ECO:0007669"/>
    <property type="project" value="InterPro"/>
</dbReference>
<dbReference type="GO" id="GO:0042777">
    <property type="term" value="P:proton motive force-driven plasma membrane ATP synthesis"/>
    <property type="evidence" value="ECO:0007669"/>
    <property type="project" value="UniProtKB-UniRule"/>
</dbReference>
<dbReference type="Gene3D" id="3.30.2320.30">
    <property type="entry name" value="ATP synthase, E subunit, C-terminal"/>
    <property type="match status" value="1"/>
</dbReference>
<dbReference type="Gene3D" id="1.20.5.620">
    <property type="entry name" value="F1F0 ATP synthase subunit B, membrane domain"/>
    <property type="match status" value="1"/>
</dbReference>
<dbReference type="HAMAP" id="MF_00311">
    <property type="entry name" value="ATP_synth_E_arch"/>
    <property type="match status" value="1"/>
</dbReference>
<dbReference type="InterPro" id="IPR038495">
    <property type="entry name" value="ATPase_E_C"/>
</dbReference>
<dbReference type="InterPro" id="IPR002842">
    <property type="entry name" value="ATPase_V1_Esu"/>
</dbReference>
<dbReference type="Pfam" id="PF01991">
    <property type="entry name" value="vATP-synt_E"/>
    <property type="match status" value="1"/>
</dbReference>
<dbReference type="SUPFAM" id="SSF160527">
    <property type="entry name" value="V-type ATPase subunit E-like"/>
    <property type="match status" value="1"/>
</dbReference>
<reference key="1">
    <citation type="journal article" date="2006" name="Genome Res.">
        <title>Skewed genomic variability in strains of the toxigenic bacterial pathogen, Clostridium perfringens.</title>
        <authorList>
            <person name="Myers G.S.A."/>
            <person name="Rasko D.A."/>
            <person name="Cheung J.K."/>
            <person name="Ravel J."/>
            <person name="Seshadri R."/>
            <person name="DeBoy R.T."/>
            <person name="Ren Q."/>
            <person name="Varga J."/>
            <person name="Awad M.M."/>
            <person name="Brinkac L.M."/>
            <person name="Daugherty S.C."/>
            <person name="Haft D.H."/>
            <person name="Dodson R.J."/>
            <person name="Madupu R."/>
            <person name="Nelson W.C."/>
            <person name="Rosovitz M.J."/>
            <person name="Sullivan S.A."/>
            <person name="Khouri H."/>
            <person name="Dimitrov G.I."/>
            <person name="Watkins K.L."/>
            <person name="Mulligan S."/>
            <person name="Benton J."/>
            <person name="Radune D."/>
            <person name="Fisher D.J."/>
            <person name="Atkins H.S."/>
            <person name="Hiscox T."/>
            <person name="Jost B.H."/>
            <person name="Billington S.J."/>
            <person name="Songer J.G."/>
            <person name="McClane B.A."/>
            <person name="Titball R.W."/>
            <person name="Rood J.I."/>
            <person name="Melville S.B."/>
            <person name="Paulsen I.T."/>
        </authorList>
    </citation>
    <scope>NUCLEOTIDE SEQUENCE [LARGE SCALE GENOMIC DNA]</scope>
    <source>
        <strain>ATCC 13124 / DSM 756 / JCM 1290 / NCIMB 6125 / NCTC 8237 / S 107 / Type A</strain>
    </source>
</reference>
<organism>
    <name type="scientific">Clostridium perfringens (strain ATCC 13124 / DSM 756 / JCM 1290 / NCIMB 6125 / NCTC 8237 / Type A)</name>
    <dbReference type="NCBI Taxonomy" id="195103"/>
    <lineage>
        <taxon>Bacteria</taxon>
        <taxon>Bacillati</taxon>
        <taxon>Bacillota</taxon>
        <taxon>Clostridia</taxon>
        <taxon>Eubacteriales</taxon>
        <taxon>Clostridiaceae</taxon>
        <taxon>Clostridium</taxon>
    </lineage>
</organism>
<accession>Q0TPW4</accession>